<comment type="function">
    <text evidence="1">Participates in replication and packaging of the viral genome. Plays a crucial role, together with NSP5, in the formation of virus factories (viroplasms) which are large inclusions in the host cytoplasm where replication intermediates are assembled and viral RNA replication takes place. Displays ssRNA binding, NTPase, RNA triphosphatase (RTPase) and ATP-independent helix-unwinding activities. The unwinding activity may prepare and organize plus-strand RNAs for packaging and replication by removing interfering secondary structures. The RTPase activity plays a role in the removal of the gamma-phosphate from the rotavirus RNA minus strands of dsRNA genome segments.</text>
</comment>
<comment type="cofactor">
    <cofactor evidence="1">
        <name>Mg(2+)</name>
        <dbReference type="ChEBI" id="CHEBI:18420"/>
    </cofactor>
</comment>
<comment type="subunit">
    <text evidence="1">Homooctamer. Interacts with VP1; this interaction is weak. Interacts with NSP5; this interaction leads to up-regulation of NSP5 phosphorylation and formation of viral factories.</text>
</comment>
<comment type="subcellular location">
    <subcellularLocation>
        <location evidence="1">Host cytoplasm</location>
    </subcellularLocation>
    <text evidence="1">Found in spherical cytoplasmic structures, called viral factories, that appear early after infection and are the site of viral replication and packaging.</text>
</comment>
<comment type="similarity">
    <text evidence="1">Belongs to the rotavirus NSP2 family.</text>
</comment>
<comment type="sequence caution">
    <conflict type="frameshift">
        <sequence resource="EMBL-CDS" id="CAI30287"/>
    </conflict>
</comment>
<feature type="chain" id="PRO_0000369851" description="Non-structural protein 2">
    <location>
        <begin position="1"/>
        <end position="279"/>
    </location>
</feature>
<feature type="region of interest" description="RNA-binding" evidence="1">
    <location>
        <begin position="214"/>
        <end position="249"/>
    </location>
</feature>
<feature type="active site" description="For NTPase and RTPase activities" evidence="1">
    <location>
        <position position="233"/>
    </location>
</feature>
<feature type="binding site" evidence="1">
    <location>
        <begin position="119"/>
        <end position="121"/>
    </location>
    <ligand>
        <name>ATP</name>
        <dbReference type="ChEBI" id="CHEBI:30616"/>
    </ligand>
</feature>
<feature type="binding site" evidence="1">
    <location>
        <position position="201"/>
    </location>
    <ligand>
        <name>ATP</name>
        <dbReference type="ChEBI" id="CHEBI:30616"/>
    </ligand>
</feature>
<feature type="binding site" evidence="1">
    <location>
        <begin position="229"/>
        <end position="231"/>
    </location>
    <ligand>
        <name>ATP</name>
        <dbReference type="ChEBI" id="CHEBI:30616"/>
    </ligand>
</feature>
<feature type="binding site" evidence="1">
    <location>
        <position position="235"/>
    </location>
    <ligand>
        <name>ATP</name>
        <dbReference type="ChEBI" id="CHEBI:30616"/>
    </ligand>
</feature>
<feature type="sequence conflict" description="In Ref. 2; CAI30287." ref="2">
    <original>C</original>
    <variation>S</variation>
    <location>
        <position position="60"/>
    </location>
</feature>
<feature type="sequence conflict" description="In Ref. 2; CAI30287." ref="2">
    <original>P</original>
    <variation>L</variation>
    <location>
        <position position="63"/>
    </location>
</feature>
<feature type="sequence conflict" description="In Ref. 2; CAI30287." ref="2">
    <original>M</original>
    <variation>I</variation>
    <location>
        <position position="84"/>
    </location>
</feature>
<feature type="sequence conflict" description="In Ref. 2; CAI30287." ref="2">
    <original>N</original>
    <variation>S</variation>
    <location>
        <position position="105"/>
    </location>
</feature>
<feature type="sequence conflict" description="In Ref. 2; CAI30287." ref="2">
    <original>R</original>
    <variation>H</variation>
    <location>
        <position position="142"/>
    </location>
</feature>
<feature type="sequence conflict" description="In Ref. 2; CAI30287." ref="2">
    <original>G</original>
    <variation>S</variation>
    <location>
        <position position="146"/>
    </location>
</feature>
<feature type="sequence conflict" description="In Ref. 2; CAI30287." ref="2">
    <original>S</original>
    <variation>T</variation>
    <location>
        <position position="175"/>
    </location>
</feature>
<name>NSP2_ROTGA</name>
<organismHost>
    <name type="scientific">Homo sapiens</name>
    <name type="common">Human</name>
    <dbReference type="NCBI Taxonomy" id="9606"/>
</organismHost>
<dbReference type="EC" id="3.6.4.-" evidence="1"/>
<dbReference type="EMBL" id="M91437">
    <property type="protein sequence ID" value="AAA47328.1"/>
    <property type="molecule type" value="mRNA"/>
</dbReference>
<dbReference type="EMBL" id="AJ867609">
    <property type="protein sequence ID" value="CAI30287.1"/>
    <property type="status" value="ALT_FRAME"/>
    <property type="molecule type" value="Genomic_RNA"/>
</dbReference>
<dbReference type="SMR" id="Q86197"/>
<dbReference type="GO" id="GO:0030430">
    <property type="term" value="C:host cell cytoplasm"/>
    <property type="evidence" value="ECO:0007669"/>
    <property type="project" value="UniProtKB-SubCell"/>
</dbReference>
<dbReference type="GO" id="GO:0005524">
    <property type="term" value="F:ATP binding"/>
    <property type="evidence" value="ECO:0007669"/>
    <property type="project" value="UniProtKB-KW"/>
</dbReference>
<dbReference type="GO" id="GO:0016817">
    <property type="term" value="F:hydrolase activity, acting on acid anhydrides"/>
    <property type="evidence" value="ECO:0007669"/>
    <property type="project" value="UniProtKB-UniRule"/>
</dbReference>
<dbReference type="GO" id="GO:0046872">
    <property type="term" value="F:metal ion binding"/>
    <property type="evidence" value="ECO:0007669"/>
    <property type="project" value="UniProtKB-UniRule"/>
</dbReference>
<dbReference type="GO" id="GO:0003723">
    <property type="term" value="F:RNA binding"/>
    <property type="evidence" value="ECO:0007669"/>
    <property type="project" value="UniProtKB-UniRule"/>
</dbReference>
<dbReference type="GO" id="GO:0019079">
    <property type="term" value="P:viral genome replication"/>
    <property type="evidence" value="ECO:0007669"/>
    <property type="project" value="UniProtKB-UniRule"/>
</dbReference>
<dbReference type="HAMAP" id="MF_04089">
    <property type="entry name" value="ROTA_NSP2"/>
    <property type="match status" value="1"/>
</dbReference>
<dbReference type="InterPro" id="IPR003668">
    <property type="entry name" value="Rotavirus_NSP2"/>
</dbReference>
<accession>Q86197</accession>
<accession>Q5K038</accession>
<keyword id="KW-0067">ATP-binding</keyword>
<keyword id="KW-1035">Host cytoplasm</keyword>
<keyword id="KW-0378">Hydrolase</keyword>
<keyword id="KW-0460">Magnesium</keyword>
<keyword id="KW-0479">Metal-binding</keyword>
<keyword id="KW-0547">Nucleotide-binding</keyword>
<keyword id="KW-0694">RNA-binding</keyword>
<proteinExistence type="evidence at transcript level"/>
<organism>
    <name type="scientific">Rotavirus B (isolate RVB/Human/China/ADRV/1982)</name>
    <name type="common">RV-B</name>
    <name type="synonym">Rotavirus B (isolate adult diarrhea rotavirus)</name>
    <dbReference type="NCBI Taxonomy" id="10942"/>
    <lineage>
        <taxon>Viruses</taxon>
        <taxon>Riboviria</taxon>
        <taxon>Orthornavirae</taxon>
        <taxon>Duplornaviricota</taxon>
        <taxon>Resentoviricetes</taxon>
        <taxon>Reovirales</taxon>
        <taxon>Sedoreoviridae</taxon>
        <taxon>Rotavirus</taxon>
        <taxon>Rotavirus B</taxon>
    </lineage>
</organism>
<protein>
    <recommendedName>
        <fullName evidence="1">Non-structural protein 2</fullName>
        <shortName evidence="1">NSP2</shortName>
        <ecNumber evidence="1">3.6.4.-</ecNumber>
    </recommendedName>
    <alternativeName>
        <fullName evidence="1">NCVP3</fullName>
    </alternativeName>
    <alternativeName>
        <fullName evidence="1">Non-structural RNA-binding protein 35</fullName>
        <shortName evidence="1">NS35</shortName>
    </alternativeName>
</protein>
<evidence type="ECO:0000255" key="1">
    <source>
        <dbReference type="HAMAP-Rule" id="MF_04089"/>
    </source>
</evidence>
<sequence length="279" mass="32110">MTQSVSLSDFIVKTEDGYMPSDRECIALDRYLSKEQKELRETFKDGKNDRAALRIKMFLCPSPSRRFTQHGVVPMREIKTNTDMPSTLWTLVTDWLLNLLQDEENQEMFEDFISSKFPDVLASADKLARFAQRLEDRKDVLRKNFGKAMNAFGACFWAIKPTFATEGKCNVVRASDDSIILEFQPVPEYFRCGKSKATFYKLYPLSDEQPVNGMLALKAVAGNQFFMYHGHGHIRTVPYHELLTLSNHSLVKIKKRSKTFLNHHSQLNVVVNFSICSME</sequence>
<reference key="1">
    <citation type="journal article" date="2005" name="J. Clin. Virol.">
        <title>The evolution of human group B rotaviruses: correction and an update.</title>
        <authorList>
            <person name="Jiang B."/>
            <person name="Wang Y."/>
            <person name="Glass R.I."/>
            <person name="Fang Z.-Y."/>
        </authorList>
    </citation>
    <scope>NUCLEOTIDE SEQUENCE [GENOMIC RNA]</scope>
</reference>
<reference key="2">
    <citation type="submission" date="1992-09" db="EMBL/GenBank/DDBJ databases">
        <title>Primary identification of the eighth RNA segment of the group B rotavirus ADRV.</title>
        <authorList>
            <person name="Mackow E.R."/>
            <person name="Chen G."/>
            <person name="Werner R."/>
            <person name="Fay M.E."/>
            <person name="Tao H."/>
        </authorList>
    </citation>
    <scope>NUCLEOTIDE SEQUENCE [MRNA]</scope>
</reference>